<comment type="function">
    <text evidence="1">As part of a BORC-like complex, it may play a role in the movement and localization of lysosomes at the cell periphery. Associated with the cytosolic face of lysosomes, this complex may couple lysosomes to microtubule plus-end-directed kinesin motors, driving lysosome movement toward the cell periphery.</text>
</comment>
<comment type="subcellular location">
    <subcellularLocation>
        <location evidence="1">Lysosome membrane</location>
    </subcellularLocation>
</comment>
<comment type="disruption phenotype">
    <text evidence="3">Borcs8 knockout results in decreased brain and eye size, reduced muscle size, motor axon defects, anomalies of neuromuscular junctions and impaired motility.</text>
</comment>
<comment type="similarity">
    <text evidence="4">Belongs to the BORCS8 family.</text>
</comment>
<proteinExistence type="evidence at transcript level"/>
<name>BORC8_DANRE</name>
<gene>
    <name evidence="1" type="primary">borcs8</name>
    <name evidence="5" type="ORF">si:ch211-125m10.2</name>
</gene>
<accession>A3KQI3</accession>
<accession>B3DG62</accession>
<dbReference type="EMBL" id="BX649643">
    <property type="protein sequence ID" value="CAM56297.1"/>
    <property type="molecule type" value="Genomic_DNA"/>
</dbReference>
<dbReference type="EMBL" id="BC162286">
    <property type="protein sequence ID" value="AAI62286.1"/>
    <property type="molecule type" value="mRNA"/>
</dbReference>
<dbReference type="EMBL" id="BC162309">
    <property type="protein sequence ID" value="AAI62309.1"/>
    <property type="molecule type" value="mRNA"/>
</dbReference>
<dbReference type="RefSeq" id="NP_001091717.1">
    <property type="nucleotide sequence ID" value="NM_001098247.2"/>
</dbReference>
<dbReference type="FunCoup" id="A3KQI3">
    <property type="interactions" value="1191"/>
</dbReference>
<dbReference type="STRING" id="7955.ENSDARP00000096205"/>
<dbReference type="PaxDb" id="7955-ENSDARP00000096205"/>
<dbReference type="PeptideAtlas" id="A3KQI3"/>
<dbReference type="Ensembl" id="ENSDART00000105432">
    <property type="protein sequence ID" value="ENSDARP00000096205"/>
    <property type="gene ID" value="ENSDARG00000071339"/>
</dbReference>
<dbReference type="GeneID" id="558180"/>
<dbReference type="KEGG" id="dre:558180"/>
<dbReference type="AGR" id="ZFIN:ZDB-GENE-050208-757"/>
<dbReference type="CTD" id="729991"/>
<dbReference type="ZFIN" id="ZDB-GENE-050208-757">
    <property type="gene designation" value="borcs8"/>
</dbReference>
<dbReference type="eggNOG" id="KOG4523">
    <property type="taxonomic scope" value="Eukaryota"/>
</dbReference>
<dbReference type="HOGENOM" id="CLU_151479_0_0_1"/>
<dbReference type="InParanoid" id="A3KQI3"/>
<dbReference type="OMA" id="INIRDHM"/>
<dbReference type="OrthoDB" id="10044187at2759"/>
<dbReference type="PhylomeDB" id="A3KQI3"/>
<dbReference type="TreeFam" id="TF313931"/>
<dbReference type="PRO" id="PR:A3KQI3"/>
<dbReference type="Proteomes" id="UP000000437">
    <property type="component" value="Chromosome 22"/>
</dbReference>
<dbReference type="Bgee" id="ENSDARG00000071339">
    <property type="expression patterns" value="Expressed in tail and 29 other cell types or tissues"/>
</dbReference>
<dbReference type="ExpressionAtlas" id="A3KQI3">
    <property type="expression patterns" value="baseline"/>
</dbReference>
<dbReference type="GO" id="GO:0099078">
    <property type="term" value="C:BORC complex"/>
    <property type="evidence" value="ECO:0000250"/>
    <property type="project" value="UniProtKB"/>
</dbReference>
<dbReference type="GO" id="GO:0005765">
    <property type="term" value="C:lysosomal membrane"/>
    <property type="evidence" value="ECO:0007669"/>
    <property type="project" value="UniProtKB-SubCell"/>
</dbReference>
<dbReference type="InterPro" id="IPR019320">
    <property type="entry name" value="BORCS8"/>
</dbReference>
<dbReference type="PANTHER" id="PTHR21146:SF0">
    <property type="entry name" value="BLOC-1-RELATED COMPLEX SUBUNIT 8"/>
    <property type="match status" value="1"/>
</dbReference>
<dbReference type="PANTHER" id="PTHR21146">
    <property type="entry name" value="MEF2B PROTEIN"/>
    <property type="match status" value="1"/>
</dbReference>
<dbReference type="Pfam" id="PF10167">
    <property type="entry name" value="BORCS8"/>
    <property type="match status" value="1"/>
</dbReference>
<sequence>MEDQEMQLKVKRVTDKFTESMYVLANEPSIALYRLQEHVRRSLPELVQHKTDMQSWEEQSQGAIYTVEYACSAVKSMTNSSLYFKNIDGLLRQAISLKEQISSSQGRSAVINPNETPAHTSVTP</sequence>
<reference key="1">
    <citation type="journal article" date="2013" name="Nature">
        <title>The zebrafish reference genome sequence and its relationship to the human genome.</title>
        <authorList>
            <person name="Howe K."/>
            <person name="Clark M.D."/>
            <person name="Torroja C.F."/>
            <person name="Torrance J."/>
            <person name="Berthelot C."/>
            <person name="Muffato M."/>
            <person name="Collins J.E."/>
            <person name="Humphray S."/>
            <person name="McLaren K."/>
            <person name="Matthews L."/>
            <person name="McLaren S."/>
            <person name="Sealy I."/>
            <person name="Caccamo M."/>
            <person name="Churcher C."/>
            <person name="Scott C."/>
            <person name="Barrett J.C."/>
            <person name="Koch R."/>
            <person name="Rauch G.J."/>
            <person name="White S."/>
            <person name="Chow W."/>
            <person name="Kilian B."/>
            <person name="Quintais L.T."/>
            <person name="Guerra-Assuncao J.A."/>
            <person name="Zhou Y."/>
            <person name="Gu Y."/>
            <person name="Yen J."/>
            <person name="Vogel J.H."/>
            <person name="Eyre T."/>
            <person name="Redmond S."/>
            <person name="Banerjee R."/>
            <person name="Chi J."/>
            <person name="Fu B."/>
            <person name="Langley E."/>
            <person name="Maguire S.F."/>
            <person name="Laird G.K."/>
            <person name="Lloyd D."/>
            <person name="Kenyon E."/>
            <person name="Donaldson S."/>
            <person name="Sehra H."/>
            <person name="Almeida-King J."/>
            <person name="Loveland J."/>
            <person name="Trevanion S."/>
            <person name="Jones M."/>
            <person name="Quail M."/>
            <person name="Willey D."/>
            <person name="Hunt A."/>
            <person name="Burton J."/>
            <person name="Sims S."/>
            <person name="McLay K."/>
            <person name="Plumb B."/>
            <person name="Davis J."/>
            <person name="Clee C."/>
            <person name="Oliver K."/>
            <person name="Clark R."/>
            <person name="Riddle C."/>
            <person name="Elliot D."/>
            <person name="Threadgold G."/>
            <person name="Harden G."/>
            <person name="Ware D."/>
            <person name="Begum S."/>
            <person name="Mortimore B."/>
            <person name="Kerry G."/>
            <person name="Heath P."/>
            <person name="Phillimore B."/>
            <person name="Tracey A."/>
            <person name="Corby N."/>
            <person name="Dunn M."/>
            <person name="Johnson C."/>
            <person name="Wood J."/>
            <person name="Clark S."/>
            <person name="Pelan S."/>
            <person name="Griffiths G."/>
            <person name="Smith M."/>
            <person name="Glithero R."/>
            <person name="Howden P."/>
            <person name="Barker N."/>
            <person name="Lloyd C."/>
            <person name="Stevens C."/>
            <person name="Harley J."/>
            <person name="Holt K."/>
            <person name="Panagiotidis G."/>
            <person name="Lovell J."/>
            <person name="Beasley H."/>
            <person name="Henderson C."/>
            <person name="Gordon D."/>
            <person name="Auger K."/>
            <person name="Wright D."/>
            <person name="Collins J."/>
            <person name="Raisen C."/>
            <person name="Dyer L."/>
            <person name="Leung K."/>
            <person name="Robertson L."/>
            <person name="Ambridge K."/>
            <person name="Leongamornlert D."/>
            <person name="McGuire S."/>
            <person name="Gilderthorp R."/>
            <person name="Griffiths C."/>
            <person name="Manthravadi D."/>
            <person name="Nichol S."/>
            <person name="Barker G."/>
            <person name="Whitehead S."/>
            <person name="Kay M."/>
            <person name="Brown J."/>
            <person name="Murnane C."/>
            <person name="Gray E."/>
            <person name="Humphries M."/>
            <person name="Sycamore N."/>
            <person name="Barker D."/>
            <person name="Saunders D."/>
            <person name="Wallis J."/>
            <person name="Babbage A."/>
            <person name="Hammond S."/>
            <person name="Mashreghi-Mohammadi M."/>
            <person name="Barr L."/>
            <person name="Martin S."/>
            <person name="Wray P."/>
            <person name="Ellington A."/>
            <person name="Matthews N."/>
            <person name="Ellwood M."/>
            <person name="Woodmansey R."/>
            <person name="Clark G."/>
            <person name="Cooper J."/>
            <person name="Tromans A."/>
            <person name="Grafham D."/>
            <person name="Skuce C."/>
            <person name="Pandian R."/>
            <person name="Andrews R."/>
            <person name="Harrison E."/>
            <person name="Kimberley A."/>
            <person name="Garnett J."/>
            <person name="Fosker N."/>
            <person name="Hall R."/>
            <person name="Garner P."/>
            <person name="Kelly D."/>
            <person name="Bird C."/>
            <person name="Palmer S."/>
            <person name="Gehring I."/>
            <person name="Berger A."/>
            <person name="Dooley C.M."/>
            <person name="Ersan-Urun Z."/>
            <person name="Eser C."/>
            <person name="Geiger H."/>
            <person name="Geisler M."/>
            <person name="Karotki L."/>
            <person name="Kirn A."/>
            <person name="Konantz J."/>
            <person name="Konantz M."/>
            <person name="Oberlander M."/>
            <person name="Rudolph-Geiger S."/>
            <person name="Teucke M."/>
            <person name="Lanz C."/>
            <person name="Raddatz G."/>
            <person name="Osoegawa K."/>
            <person name="Zhu B."/>
            <person name="Rapp A."/>
            <person name="Widaa S."/>
            <person name="Langford C."/>
            <person name="Yang F."/>
            <person name="Schuster S.C."/>
            <person name="Carter N.P."/>
            <person name="Harrow J."/>
            <person name="Ning Z."/>
            <person name="Herrero J."/>
            <person name="Searle S.M."/>
            <person name="Enright A."/>
            <person name="Geisler R."/>
            <person name="Plasterk R.H."/>
            <person name="Lee C."/>
            <person name="Westerfield M."/>
            <person name="de Jong P.J."/>
            <person name="Zon L.I."/>
            <person name="Postlethwait J.H."/>
            <person name="Nusslein-Volhard C."/>
            <person name="Hubbard T.J."/>
            <person name="Roest Crollius H."/>
            <person name="Rogers J."/>
            <person name="Stemple D.L."/>
        </authorList>
    </citation>
    <scope>NUCLEOTIDE SEQUENCE [LARGE SCALE GENOMIC DNA]</scope>
    <source>
        <strain>Tuebingen</strain>
    </source>
</reference>
<reference key="2">
    <citation type="submission" date="2008-04" db="EMBL/GenBank/DDBJ databases">
        <authorList>
            <consortium name="NIH - Zebrafish Gene Collection (ZGC) project"/>
        </authorList>
    </citation>
    <scope>NUCLEOTIDE SEQUENCE [LARGE SCALE MRNA]</scope>
</reference>
<reference key="3">
    <citation type="journal article" date="2024" name="Brain">
        <title>Biallelic BORCS8 variants cause an infantile-onset neurodegenerative disorder with altered lysosome dynamics.</title>
        <authorList>
            <person name="De Pace R."/>
            <person name="Maroofian R."/>
            <person name="Paimboeuf A."/>
            <person name="Zamani M."/>
            <person name="Zaki M.S."/>
            <person name="Sadeghian S."/>
            <person name="Azizimalamiri R."/>
            <person name="Galehdari H."/>
            <person name="Zeighami J."/>
            <person name="Williamson C.D."/>
            <person name="Fleming E."/>
            <person name="Zhou D."/>
            <person name="Gannon J.L."/>
            <person name="Thiffault I."/>
            <person name="Roze E."/>
            <person name="Suri M."/>
            <person name="Zifarelli G."/>
            <person name="Bauer P."/>
            <person name="Houlden H."/>
            <person name="Severino M."/>
            <person name="Patten S.A."/>
            <person name="Farrow E."/>
            <person name="Bonifacino J.S."/>
        </authorList>
    </citation>
    <scope>DISRUPTION PHENOTYPE</scope>
</reference>
<keyword id="KW-0458">Lysosome</keyword>
<keyword id="KW-0472">Membrane</keyword>
<keyword id="KW-1185">Reference proteome</keyword>
<feature type="chain" id="PRO_0000286446" description="BLOC-1-related complex subunit 8">
    <location>
        <begin position="1"/>
        <end position="124"/>
    </location>
</feature>
<feature type="region of interest" description="Disordered" evidence="2">
    <location>
        <begin position="102"/>
        <end position="124"/>
    </location>
</feature>
<protein>
    <recommendedName>
        <fullName evidence="4">BLOC-1-related complex subunit 8</fullName>
    </recommendedName>
</protein>
<evidence type="ECO:0000250" key="1">
    <source>
        <dbReference type="UniProtKB" id="Q96FH0"/>
    </source>
</evidence>
<evidence type="ECO:0000256" key="2">
    <source>
        <dbReference type="SAM" id="MobiDB-lite"/>
    </source>
</evidence>
<evidence type="ECO:0000269" key="3">
    <source>
    </source>
</evidence>
<evidence type="ECO:0000305" key="4"/>
<evidence type="ECO:0000312" key="5">
    <source>
        <dbReference type="EMBL" id="AAI62286.1"/>
    </source>
</evidence>
<organism>
    <name type="scientific">Danio rerio</name>
    <name type="common">Zebrafish</name>
    <name type="synonym">Brachydanio rerio</name>
    <dbReference type="NCBI Taxonomy" id="7955"/>
    <lineage>
        <taxon>Eukaryota</taxon>
        <taxon>Metazoa</taxon>
        <taxon>Chordata</taxon>
        <taxon>Craniata</taxon>
        <taxon>Vertebrata</taxon>
        <taxon>Euteleostomi</taxon>
        <taxon>Actinopterygii</taxon>
        <taxon>Neopterygii</taxon>
        <taxon>Teleostei</taxon>
        <taxon>Ostariophysi</taxon>
        <taxon>Cypriniformes</taxon>
        <taxon>Danionidae</taxon>
        <taxon>Danioninae</taxon>
        <taxon>Danio</taxon>
    </lineage>
</organism>